<evidence type="ECO:0000255" key="1">
    <source>
        <dbReference type="HAMAP-Rule" id="MF_02111"/>
    </source>
</evidence>
<comment type="function">
    <text evidence="1">Catalyzes the covalent attachment of the prokaryotic ubiquitin-like protein modifier Pup to the proteasomal substrate proteins, thereby targeting them for proteasomal degradation. This tagging system is termed pupylation. The ligation reaction involves the side-chain carboxylate of the C-terminal glutamate of Pup and the side-chain amino group of a substrate lysine.</text>
</comment>
<comment type="catalytic activity">
    <reaction evidence="1">
        <text>ATP + [prokaryotic ubiquitin-like protein]-L-glutamate + [protein]-L-lysine = ADP + phosphate + N(6)-([prokaryotic ubiquitin-like protein]-gamma-L-glutamyl)-[protein]-L-lysine.</text>
        <dbReference type="EC" id="6.3.1.19"/>
    </reaction>
</comment>
<comment type="pathway">
    <text evidence="1">Protein degradation; proteasomal Pup-dependent pathway.</text>
</comment>
<comment type="pathway">
    <text evidence="1">Protein modification; protein pupylation.</text>
</comment>
<comment type="miscellaneous">
    <text evidence="1">The reaction mechanism probably proceeds via the activation of Pup by phosphorylation of its C-terminal glutamate, which is then subject to nucleophilic attack by the substrate lysine, resulting in an isopeptide bond and the release of phosphate as a good leaving group.</text>
</comment>
<comment type="similarity">
    <text evidence="1">Belongs to the Pup ligase/Pup deamidase family. Pup-conjugating enzyme subfamily.</text>
</comment>
<feature type="chain" id="PRO_0000395923" description="Pup--protein ligase">
    <location>
        <begin position="1"/>
        <end position="452"/>
    </location>
</feature>
<feature type="active site" description="Proton acceptor" evidence="1">
    <location>
        <position position="57"/>
    </location>
</feature>
<feature type="binding site" evidence="1">
    <location>
        <position position="9"/>
    </location>
    <ligand>
        <name>Mg(2+)</name>
        <dbReference type="ChEBI" id="CHEBI:18420"/>
    </ligand>
</feature>
<feature type="binding site" evidence="1">
    <location>
        <position position="53"/>
    </location>
    <ligand>
        <name>ATP</name>
        <dbReference type="ChEBI" id="CHEBI:30616"/>
    </ligand>
</feature>
<feature type="binding site" evidence="1">
    <location>
        <position position="55"/>
    </location>
    <ligand>
        <name>Mg(2+)</name>
        <dbReference type="ChEBI" id="CHEBI:18420"/>
    </ligand>
</feature>
<feature type="binding site" evidence="1">
    <location>
        <position position="63"/>
    </location>
    <ligand>
        <name>Mg(2+)</name>
        <dbReference type="ChEBI" id="CHEBI:18420"/>
    </ligand>
</feature>
<feature type="binding site" evidence="1">
    <location>
        <position position="66"/>
    </location>
    <ligand>
        <name>ATP</name>
        <dbReference type="ChEBI" id="CHEBI:30616"/>
    </ligand>
</feature>
<feature type="binding site" evidence="1">
    <location>
        <position position="419"/>
    </location>
    <ligand>
        <name>ATP</name>
        <dbReference type="ChEBI" id="CHEBI:30616"/>
    </ligand>
</feature>
<accession>B1MAJ3</accession>
<protein>
    <recommendedName>
        <fullName evidence="1">Pup--protein ligase</fullName>
        <ecNumber evidence="1">6.3.1.19</ecNumber>
    </recommendedName>
    <alternativeName>
        <fullName evidence="1">Proteasome accessory factor A</fullName>
    </alternativeName>
    <alternativeName>
        <fullName evidence="1">Pup-conjugating enzyme</fullName>
    </alternativeName>
</protein>
<reference key="1">
    <citation type="journal article" date="2009" name="PLoS ONE">
        <title>Non mycobacterial virulence genes in the genome of the emerging pathogen Mycobacterium abscessus.</title>
        <authorList>
            <person name="Ripoll F."/>
            <person name="Pasek S."/>
            <person name="Schenowitz C."/>
            <person name="Dossat C."/>
            <person name="Barbe V."/>
            <person name="Rottman M."/>
            <person name="Macheras E."/>
            <person name="Heym B."/>
            <person name="Herrmann J.L."/>
            <person name="Daffe M."/>
            <person name="Brosch R."/>
            <person name="Risler J.L."/>
            <person name="Gaillard J.L."/>
        </authorList>
    </citation>
    <scope>NUCLEOTIDE SEQUENCE [LARGE SCALE GENOMIC DNA]</scope>
    <source>
        <strain>ATCC 19977 / DSM 44196 / CCUG 20993 / CIP 104536 / JCM 13569 / NCTC 13031 / TMC 1543 / L948</strain>
    </source>
</reference>
<name>PAFA_MYCA9</name>
<organism>
    <name type="scientific">Mycobacteroides abscessus (strain ATCC 19977 / DSM 44196 / CCUG 20993 / CIP 104536 / JCM 13569 / NCTC 13031 / TMC 1543 / L948)</name>
    <name type="common">Mycobacterium abscessus</name>
    <dbReference type="NCBI Taxonomy" id="561007"/>
    <lineage>
        <taxon>Bacteria</taxon>
        <taxon>Bacillati</taxon>
        <taxon>Actinomycetota</taxon>
        <taxon>Actinomycetes</taxon>
        <taxon>Mycobacteriales</taxon>
        <taxon>Mycobacteriaceae</taxon>
        <taxon>Mycobacteroides</taxon>
        <taxon>Mycobacteroides abscessus</taxon>
    </lineage>
</organism>
<dbReference type="EC" id="6.3.1.19" evidence="1"/>
<dbReference type="EMBL" id="CU458896">
    <property type="protein sequence ID" value="CAM62264.1"/>
    <property type="molecule type" value="Genomic_DNA"/>
</dbReference>
<dbReference type="RefSeq" id="WP_005061320.1">
    <property type="nucleotide sequence ID" value="NZ_MLCG01000002.1"/>
</dbReference>
<dbReference type="SMR" id="B1MAJ3"/>
<dbReference type="GeneID" id="93379118"/>
<dbReference type="KEGG" id="mab:MAB_2183"/>
<dbReference type="UniPathway" id="UPA00997"/>
<dbReference type="UniPathway" id="UPA00998"/>
<dbReference type="Proteomes" id="UP000007137">
    <property type="component" value="Chromosome"/>
</dbReference>
<dbReference type="GO" id="GO:0005524">
    <property type="term" value="F:ATP binding"/>
    <property type="evidence" value="ECO:0007669"/>
    <property type="project" value="UniProtKB-UniRule"/>
</dbReference>
<dbReference type="GO" id="GO:0016879">
    <property type="term" value="F:ligase activity, forming carbon-nitrogen bonds"/>
    <property type="evidence" value="ECO:0007669"/>
    <property type="project" value="InterPro"/>
</dbReference>
<dbReference type="GO" id="GO:0000287">
    <property type="term" value="F:magnesium ion binding"/>
    <property type="evidence" value="ECO:0007669"/>
    <property type="project" value="UniProtKB-UniRule"/>
</dbReference>
<dbReference type="GO" id="GO:0019787">
    <property type="term" value="F:ubiquitin-like protein transferase activity"/>
    <property type="evidence" value="ECO:0007669"/>
    <property type="project" value="UniProtKB-UniRule"/>
</dbReference>
<dbReference type="GO" id="GO:0019941">
    <property type="term" value="P:modification-dependent protein catabolic process"/>
    <property type="evidence" value="ECO:0007669"/>
    <property type="project" value="UniProtKB-UniRule"/>
</dbReference>
<dbReference type="GO" id="GO:0010498">
    <property type="term" value="P:proteasomal protein catabolic process"/>
    <property type="evidence" value="ECO:0007669"/>
    <property type="project" value="UniProtKB-UniRule"/>
</dbReference>
<dbReference type="GO" id="GO:0070490">
    <property type="term" value="P:protein pupylation"/>
    <property type="evidence" value="ECO:0007669"/>
    <property type="project" value="UniProtKB-UniRule"/>
</dbReference>
<dbReference type="HAMAP" id="MF_02111">
    <property type="entry name" value="Pup_ligase"/>
    <property type="match status" value="1"/>
</dbReference>
<dbReference type="InterPro" id="IPR022279">
    <property type="entry name" value="Pup_ligase"/>
</dbReference>
<dbReference type="InterPro" id="IPR004347">
    <property type="entry name" value="Pup_ligase/deamidase"/>
</dbReference>
<dbReference type="NCBIfam" id="TIGR03686">
    <property type="entry name" value="pupylate_PafA"/>
    <property type="match status" value="1"/>
</dbReference>
<dbReference type="PANTHER" id="PTHR42307">
    <property type="entry name" value="PUP DEAMIDASE/DEPUPYLASE"/>
    <property type="match status" value="1"/>
</dbReference>
<dbReference type="PANTHER" id="PTHR42307:SF3">
    <property type="entry name" value="PUP--PROTEIN LIGASE"/>
    <property type="match status" value="1"/>
</dbReference>
<dbReference type="Pfam" id="PF03136">
    <property type="entry name" value="Pup_ligase"/>
    <property type="match status" value="1"/>
</dbReference>
<dbReference type="PIRSF" id="PIRSF018077">
    <property type="entry name" value="UCP018077"/>
    <property type="match status" value="1"/>
</dbReference>
<proteinExistence type="inferred from homology"/>
<gene>
    <name evidence="1" type="primary">pafA</name>
    <name type="ordered locus">MAB_2183</name>
</gene>
<sequence length="452" mass="51296">MQRRIMGIETEFGVTCTFHGHRRLSPDEVARYLFRRVVSWGRSSNVFLRNGARLYLDVGSHPEYATAECDSLVQLVTHDRAGERVLEDLLVDAEQRLSDEGIGGDIYLFKNNTDSAGNSYGCHENYLIVRAGEFSRISDVLLPFLVTRQLICGAGKVLQTPKAATYCLSQRAEHIWEGVSSATTRSRPIINTRDEPHADAEKYRRLHVIVGDSNMAETTTMLKVGTAALVLEMIESGVAFRDFSLDNPIRAIREVSHDLTGRRPVRLAGGRQASALDIQREYHARAVEHLNTREPNEQVEQVVELWGRTLDAVESQDFSKVDTEIDWVIKRKLFQRYQDRYNMELSDPKIAQLDLAYHDIKRGRGVFDLLQRKGLAARVTTDEEIKAAVDQPPQTTRAKLRGDFITAAQEAGRDFTVDWVHLKLNDQAQRTVLCKDPFRSVDERVERLIASM</sequence>
<keyword id="KW-0067">ATP-binding</keyword>
<keyword id="KW-0436">Ligase</keyword>
<keyword id="KW-0460">Magnesium</keyword>
<keyword id="KW-0479">Metal-binding</keyword>
<keyword id="KW-0547">Nucleotide-binding</keyword>
<keyword id="KW-1185">Reference proteome</keyword>
<keyword id="KW-0833">Ubl conjugation pathway</keyword>